<evidence type="ECO:0000250" key="1"/>
<evidence type="ECO:0000305" key="2"/>
<feature type="chain" id="PRO_0000099027" description="Tryptophan synthase beta chain">
    <location>
        <begin position="1"/>
        <end position="405"/>
    </location>
</feature>
<feature type="modified residue" description="N6-(pyridoxal phosphate)lysine" evidence="1">
    <location>
        <position position="98"/>
    </location>
</feature>
<name>TRPB_XYLFA</name>
<accession>Q9PDK4</accession>
<dbReference type="EC" id="4.2.1.20"/>
<dbReference type="EMBL" id="AE003849">
    <property type="protein sequence ID" value="AAF84184.1"/>
    <property type="status" value="ALT_INIT"/>
    <property type="molecule type" value="Genomic_DNA"/>
</dbReference>
<dbReference type="PIR" id="C82688">
    <property type="entry name" value="C82688"/>
</dbReference>
<dbReference type="RefSeq" id="WP_010893879.1">
    <property type="nucleotide sequence ID" value="NC_002488.3"/>
</dbReference>
<dbReference type="SMR" id="Q9PDK4"/>
<dbReference type="STRING" id="160492.XF_1375"/>
<dbReference type="KEGG" id="xfa:XF_1375"/>
<dbReference type="eggNOG" id="COG0133">
    <property type="taxonomic scope" value="Bacteria"/>
</dbReference>
<dbReference type="HOGENOM" id="CLU_016734_3_1_6"/>
<dbReference type="UniPathway" id="UPA00035">
    <property type="reaction ID" value="UER00044"/>
</dbReference>
<dbReference type="Proteomes" id="UP000000812">
    <property type="component" value="Chromosome"/>
</dbReference>
<dbReference type="GO" id="GO:0005737">
    <property type="term" value="C:cytoplasm"/>
    <property type="evidence" value="ECO:0007669"/>
    <property type="project" value="TreeGrafter"/>
</dbReference>
<dbReference type="GO" id="GO:0004834">
    <property type="term" value="F:tryptophan synthase activity"/>
    <property type="evidence" value="ECO:0007669"/>
    <property type="project" value="UniProtKB-UniRule"/>
</dbReference>
<dbReference type="CDD" id="cd06446">
    <property type="entry name" value="Trp-synth_B"/>
    <property type="match status" value="1"/>
</dbReference>
<dbReference type="FunFam" id="3.40.50.1100:FF:000001">
    <property type="entry name" value="Tryptophan synthase beta chain"/>
    <property type="match status" value="1"/>
</dbReference>
<dbReference type="FunFam" id="3.40.50.1100:FF:000004">
    <property type="entry name" value="Tryptophan synthase beta chain"/>
    <property type="match status" value="1"/>
</dbReference>
<dbReference type="Gene3D" id="3.40.50.1100">
    <property type="match status" value="2"/>
</dbReference>
<dbReference type="HAMAP" id="MF_00133">
    <property type="entry name" value="Trp_synth_beta"/>
    <property type="match status" value="1"/>
</dbReference>
<dbReference type="InterPro" id="IPR006653">
    <property type="entry name" value="Trp_synth_b_CS"/>
</dbReference>
<dbReference type="InterPro" id="IPR006654">
    <property type="entry name" value="Trp_synth_beta"/>
</dbReference>
<dbReference type="InterPro" id="IPR023026">
    <property type="entry name" value="Trp_synth_beta/beta-like"/>
</dbReference>
<dbReference type="InterPro" id="IPR001926">
    <property type="entry name" value="TrpB-like_PALP"/>
</dbReference>
<dbReference type="InterPro" id="IPR036052">
    <property type="entry name" value="TrpB-like_PALP_sf"/>
</dbReference>
<dbReference type="NCBIfam" id="TIGR00263">
    <property type="entry name" value="trpB"/>
    <property type="match status" value="1"/>
</dbReference>
<dbReference type="PANTHER" id="PTHR48077:SF3">
    <property type="entry name" value="TRYPTOPHAN SYNTHASE"/>
    <property type="match status" value="1"/>
</dbReference>
<dbReference type="PANTHER" id="PTHR48077">
    <property type="entry name" value="TRYPTOPHAN SYNTHASE-RELATED"/>
    <property type="match status" value="1"/>
</dbReference>
<dbReference type="Pfam" id="PF00291">
    <property type="entry name" value="PALP"/>
    <property type="match status" value="1"/>
</dbReference>
<dbReference type="PIRSF" id="PIRSF001413">
    <property type="entry name" value="Trp_syn_beta"/>
    <property type="match status" value="1"/>
</dbReference>
<dbReference type="SUPFAM" id="SSF53686">
    <property type="entry name" value="Tryptophan synthase beta subunit-like PLP-dependent enzymes"/>
    <property type="match status" value="1"/>
</dbReference>
<dbReference type="PROSITE" id="PS00168">
    <property type="entry name" value="TRP_SYNTHASE_BETA"/>
    <property type="match status" value="1"/>
</dbReference>
<protein>
    <recommendedName>
        <fullName>Tryptophan synthase beta chain</fullName>
        <ecNumber>4.2.1.20</ecNumber>
    </recommendedName>
</protein>
<sequence>MSDVTVANYHAFPDARGHFGRYGGRFVAETLIGPLQELAQAYDAARHDPDFIAAYNKDLKDYVGRPSPIYHAERLSRKVGGAQILLKREDLNHTGAHKINNTIGQALLAARMGKTRIIAETGAGQHGVASATVAARLGLECVVYMGATDIERQQINVYRMKLLGATVVPVTSGSATLKDALNEAMRDWVTHVGHTFYIIGTVAGPDPYPRMVRDFNAIVGREARAQMIEDYGRLPDAMTACVGGGSNAIGLFHAFLNDASVRIYGAEAAGDGIATGRHAASIVAGRPGVLHGNRTYVVCDDDGQILETHSVSAGLDYPGVGPEHAFLADSGRVQYVGIRDEEALAAFHLLAHTEGILAALESSHAVAHAMTLARDLPKDALVLCNLSGRGDKDVHTIAAREGVRV</sequence>
<comment type="function">
    <text evidence="1">The beta subunit is responsible for the synthesis of L-tryptophan from indole and L-serine.</text>
</comment>
<comment type="catalytic activity">
    <reaction>
        <text>(1S,2R)-1-C-(indol-3-yl)glycerol 3-phosphate + L-serine = D-glyceraldehyde 3-phosphate + L-tryptophan + H2O</text>
        <dbReference type="Rhea" id="RHEA:10532"/>
        <dbReference type="ChEBI" id="CHEBI:15377"/>
        <dbReference type="ChEBI" id="CHEBI:33384"/>
        <dbReference type="ChEBI" id="CHEBI:57912"/>
        <dbReference type="ChEBI" id="CHEBI:58866"/>
        <dbReference type="ChEBI" id="CHEBI:59776"/>
        <dbReference type="EC" id="4.2.1.20"/>
    </reaction>
</comment>
<comment type="cofactor">
    <cofactor evidence="1">
        <name>pyridoxal 5'-phosphate</name>
        <dbReference type="ChEBI" id="CHEBI:597326"/>
    </cofactor>
</comment>
<comment type="pathway">
    <text>Amino-acid biosynthesis; L-tryptophan biosynthesis; L-tryptophan from chorismate: step 5/5.</text>
</comment>
<comment type="subunit">
    <text evidence="1">Tetramer of two alpha and two beta chains.</text>
</comment>
<comment type="similarity">
    <text evidence="2">Belongs to the TrpB family.</text>
</comment>
<comment type="sequence caution" evidence="2">
    <conflict type="erroneous initiation">
        <sequence resource="EMBL-CDS" id="AAF84184"/>
    </conflict>
</comment>
<keyword id="KW-0028">Amino-acid biosynthesis</keyword>
<keyword id="KW-0057">Aromatic amino acid biosynthesis</keyword>
<keyword id="KW-0456">Lyase</keyword>
<keyword id="KW-0663">Pyridoxal phosphate</keyword>
<keyword id="KW-0822">Tryptophan biosynthesis</keyword>
<gene>
    <name type="primary">trpB</name>
    <name type="ordered locus">XF_1375</name>
</gene>
<proteinExistence type="inferred from homology"/>
<reference key="1">
    <citation type="journal article" date="2000" name="Nature">
        <title>The genome sequence of the plant pathogen Xylella fastidiosa.</title>
        <authorList>
            <person name="Simpson A.J.G."/>
            <person name="Reinach F.C."/>
            <person name="Arruda P."/>
            <person name="Abreu F.A."/>
            <person name="Acencio M."/>
            <person name="Alvarenga R."/>
            <person name="Alves L.M.C."/>
            <person name="Araya J.E."/>
            <person name="Baia G.S."/>
            <person name="Baptista C.S."/>
            <person name="Barros M.H."/>
            <person name="Bonaccorsi E.D."/>
            <person name="Bordin S."/>
            <person name="Bove J.M."/>
            <person name="Briones M.R.S."/>
            <person name="Bueno M.R.P."/>
            <person name="Camargo A.A."/>
            <person name="Camargo L.E.A."/>
            <person name="Carraro D.M."/>
            <person name="Carrer H."/>
            <person name="Colauto N.B."/>
            <person name="Colombo C."/>
            <person name="Costa F.F."/>
            <person name="Costa M.C.R."/>
            <person name="Costa-Neto C.M."/>
            <person name="Coutinho L.L."/>
            <person name="Cristofani M."/>
            <person name="Dias-Neto E."/>
            <person name="Docena C."/>
            <person name="El-Dorry H."/>
            <person name="Facincani A.P."/>
            <person name="Ferreira A.J.S."/>
            <person name="Ferreira V.C.A."/>
            <person name="Ferro J.A."/>
            <person name="Fraga J.S."/>
            <person name="Franca S.C."/>
            <person name="Franco M.C."/>
            <person name="Frohme M."/>
            <person name="Furlan L.R."/>
            <person name="Garnier M."/>
            <person name="Goldman G.H."/>
            <person name="Goldman M.H.S."/>
            <person name="Gomes S.L."/>
            <person name="Gruber A."/>
            <person name="Ho P.L."/>
            <person name="Hoheisel J.D."/>
            <person name="Junqueira M.L."/>
            <person name="Kemper E.L."/>
            <person name="Kitajima J.P."/>
            <person name="Krieger J.E."/>
            <person name="Kuramae E.E."/>
            <person name="Laigret F."/>
            <person name="Lambais M.R."/>
            <person name="Leite L.C.C."/>
            <person name="Lemos E.G.M."/>
            <person name="Lemos M.V.F."/>
            <person name="Lopes S.A."/>
            <person name="Lopes C.R."/>
            <person name="Machado J.A."/>
            <person name="Machado M.A."/>
            <person name="Madeira A.M.B.N."/>
            <person name="Madeira H.M.F."/>
            <person name="Marino C.L."/>
            <person name="Marques M.V."/>
            <person name="Martins E.A.L."/>
            <person name="Martins E.M.F."/>
            <person name="Matsukuma A.Y."/>
            <person name="Menck C.F.M."/>
            <person name="Miracca E.C."/>
            <person name="Miyaki C.Y."/>
            <person name="Monteiro-Vitorello C.B."/>
            <person name="Moon D.H."/>
            <person name="Nagai M.A."/>
            <person name="Nascimento A.L.T.O."/>
            <person name="Netto L.E.S."/>
            <person name="Nhani A. Jr."/>
            <person name="Nobrega F.G."/>
            <person name="Nunes L.R."/>
            <person name="Oliveira M.A."/>
            <person name="de Oliveira M.C."/>
            <person name="de Oliveira R.C."/>
            <person name="Palmieri D.A."/>
            <person name="Paris A."/>
            <person name="Peixoto B.R."/>
            <person name="Pereira G.A.G."/>
            <person name="Pereira H.A. Jr."/>
            <person name="Pesquero J.B."/>
            <person name="Quaggio R.B."/>
            <person name="Roberto P.G."/>
            <person name="Rodrigues V."/>
            <person name="de Rosa A.J.M."/>
            <person name="de Rosa V.E. Jr."/>
            <person name="de Sa R.G."/>
            <person name="Santelli R.V."/>
            <person name="Sawasaki H.E."/>
            <person name="da Silva A.C.R."/>
            <person name="da Silva A.M."/>
            <person name="da Silva F.R."/>
            <person name="Silva W.A. Jr."/>
            <person name="da Silveira J.F."/>
            <person name="Silvestri M.L.Z."/>
            <person name="Siqueira W.J."/>
            <person name="de Souza A.A."/>
            <person name="de Souza A.P."/>
            <person name="Terenzi M.F."/>
            <person name="Truffi D."/>
            <person name="Tsai S.M."/>
            <person name="Tsuhako M.H."/>
            <person name="Vallada H."/>
            <person name="Van Sluys M.A."/>
            <person name="Verjovski-Almeida S."/>
            <person name="Vettore A.L."/>
            <person name="Zago M.A."/>
            <person name="Zatz M."/>
            <person name="Meidanis J."/>
            <person name="Setubal J.C."/>
        </authorList>
    </citation>
    <scope>NUCLEOTIDE SEQUENCE [LARGE SCALE GENOMIC DNA]</scope>
    <source>
        <strain>9a5c</strain>
    </source>
</reference>
<organism>
    <name type="scientific">Xylella fastidiosa (strain 9a5c)</name>
    <dbReference type="NCBI Taxonomy" id="160492"/>
    <lineage>
        <taxon>Bacteria</taxon>
        <taxon>Pseudomonadati</taxon>
        <taxon>Pseudomonadota</taxon>
        <taxon>Gammaproteobacteria</taxon>
        <taxon>Lysobacterales</taxon>
        <taxon>Lysobacteraceae</taxon>
        <taxon>Xylella</taxon>
    </lineage>
</organism>